<reference key="1">
    <citation type="submission" date="2006-12" db="EMBL/GenBank/DDBJ databases">
        <title>Complete sequence of Halorhodospira halophila SL1.</title>
        <authorList>
            <consortium name="US DOE Joint Genome Institute"/>
            <person name="Copeland A."/>
            <person name="Lucas S."/>
            <person name="Lapidus A."/>
            <person name="Barry K."/>
            <person name="Detter J.C."/>
            <person name="Glavina del Rio T."/>
            <person name="Hammon N."/>
            <person name="Israni S."/>
            <person name="Dalin E."/>
            <person name="Tice H."/>
            <person name="Pitluck S."/>
            <person name="Saunders E."/>
            <person name="Brettin T."/>
            <person name="Bruce D."/>
            <person name="Han C."/>
            <person name="Tapia R."/>
            <person name="Schmutz J."/>
            <person name="Larimer F."/>
            <person name="Land M."/>
            <person name="Hauser L."/>
            <person name="Kyrpides N."/>
            <person name="Mikhailova N."/>
            <person name="Hoff W."/>
            <person name="Richardson P."/>
        </authorList>
    </citation>
    <scope>NUCLEOTIDE SEQUENCE [LARGE SCALE GENOMIC DNA]</scope>
    <source>
        <strain>DSM 244 / SL1</strain>
    </source>
</reference>
<proteinExistence type="inferred from homology"/>
<accession>A1WUG8</accession>
<organism>
    <name type="scientific">Halorhodospira halophila (strain DSM 244 / SL1)</name>
    <name type="common">Ectothiorhodospira halophila (strain DSM 244 / SL1)</name>
    <dbReference type="NCBI Taxonomy" id="349124"/>
    <lineage>
        <taxon>Bacteria</taxon>
        <taxon>Pseudomonadati</taxon>
        <taxon>Pseudomonadota</taxon>
        <taxon>Gammaproteobacteria</taxon>
        <taxon>Chromatiales</taxon>
        <taxon>Ectothiorhodospiraceae</taxon>
        <taxon>Halorhodospira</taxon>
    </lineage>
</organism>
<protein>
    <recommendedName>
        <fullName evidence="1">N(2)-fixation sustaining protein CowN</fullName>
    </recommendedName>
    <alternativeName>
        <fullName evidence="1">CO weal-nitrogenase</fullName>
    </alternativeName>
</protein>
<name>COWN_HALHL</name>
<dbReference type="EMBL" id="CP000544">
    <property type="protein sequence ID" value="ABM61330.1"/>
    <property type="molecule type" value="Genomic_DNA"/>
</dbReference>
<dbReference type="RefSeq" id="WP_011813353.1">
    <property type="nucleotide sequence ID" value="NC_008789.1"/>
</dbReference>
<dbReference type="STRING" id="349124.Hhal_0544"/>
<dbReference type="KEGG" id="hha:Hhal_0544"/>
<dbReference type="eggNOG" id="ENOG5033N74">
    <property type="taxonomic scope" value="Bacteria"/>
</dbReference>
<dbReference type="HOGENOM" id="CLU_149349_0_0_6"/>
<dbReference type="OrthoDB" id="6899736at2"/>
<dbReference type="Proteomes" id="UP000000647">
    <property type="component" value="Chromosome"/>
</dbReference>
<dbReference type="GO" id="GO:0009399">
    <property type="term" value="P:nitrogen fixation"/>
    <property type="evidence" value="ECO:0007669"/>
    <property type="project" value="UniProtKB-UniRule"/>
</dbReference>
<dbReference type="HAMAP" id="MF_02117">
    <property type="entry name" value="CowN"/>
    <property type="match status" value="1"/>
</dbReference>
<dbReference type="InterPro" id="IPR024899">
    <property type="entry name" value="CowN"/>
</dbReference>
<dbReference type="NCBIfam" id="NF033689">
    <property type="entry name" value="N2Fix_CO_CowN"/>
    <property type="match status" value="1"/>
</dbReference>
<dbReference type="Pfam" id="PF20543">
    <property type="entry name" value="CowN"/>
    <property type="match status" value="1"/>
</dbReference>
<sequence length="90" mass="10322">MATADHEATGLDCDHAIRRLLRRIDAHIADEPRDSPVRRYLERELGGREGTEADTRLVVHAQINVVRELFERRSDADGLRLLSNIERECC</sequence>
<feature type="chain" id="PRO_0000407258" description="N(2)-fixation sustaining protein CowN">
    <location>
        <begin position="1"/>
        <end position="90"/>
    </location>
</feature>
<keyword id="KW-0535">Nitrogen fixation</keyword>
<keyword id="KW-1185">Reference proteome</keyword>
<gene>
    <name evidence="1" type="primary">cowN</name>
    <name type="ordered locus">Hhal_0544</name>
</gene>
<evidence type="ECO:0000255" key="1">
    <source>
        <dbReference type="HAMAP-Rule" id="MF_02117"/>
    </source>
</evidence>
<comment type="function">
    <text evidence="1">Is required to sustain N(2)-dependent growth in the presence of low levels of carbon monoxide (CO). Probably acts by protecting the N(2) fixation ability of the nitrogenase complex, which is inactivated in the presence of CO.</text>
</comment>
<comment type="similarity">
    <text evidence="1">Belongs to the CowN family.</text>
</comment>